<accession>B4S9B9</accession>
<feature type="chain" id="PRO_1000097334" description="Peptide deformylase">
    <location>
        <begin position="1"/>
        <end position="186"/>
    </location>
</feature>
<feature type="active site" evidence="1">
    <location>
        <position position="137"/>
    </location>
</feature>
<feature type="binding site" evidence="1">
    <location>
        <position position="94"/>
    </location>
    <ligand>
        <name>Fe cation</name>
        <dbReference type="ChEBI" id="CHEBI:24875"/>
    </ligand>
</feature>
<feature type="binding site" evidence="1">
    <location>
        <position position="136"/>
    </location>
    <ligand>
        <name>Fe cation</name>
        <dbReference type="ChEBI" id="CHEBI:24875"/>
    </ligand>
</feature>
<feature type="binding site" evidence="1">
    <location>
        <position position="140"/>
    </location>
    <ligand>
        <name>Fe cation</name>
        <dbReference type="ChEBI" id="CHEBI:24875"/>
    </ligand>
</feature>
<name>DEF_PROA2</name>
<keyword id="KW-0378">Hydrolase</keyword>
<keyword id="KW-0408">Iron</keyword>
<keyword id="KW-0479">Metal-binding</keyword>
<keyword id="KW-0648">Protein biosynthesis</keyword>
<dbReference type="EC" id="3.5.1.88" evidence="1"/>
<dbReference type="EMBL" id="CP001108">
    <property type="protein sequence ID" value="ACF46589.1"/>
    <property type="molecule type" value="Genomic_DNA"/>
</dbReference>
<dbReference type="RefSeq" id="WP_012506122.1">
    <property type="nucleotide sequence ID" value="NC_011059.1"/>
</dbReference>
<dbReference type="SMR" id="B4S9B9"/>
<dbReference type="STRING" id="290512.Paes_1571"/>
<dbReference type="KEGG" id="paa:Paes_1571"/>
<dbReference type="eggNOG" id="COG0242">
    <property type="taxonomic scope" value="Bacteria"/>
</dbReference>
<dbReference type="HOGENOM" id="CLU_061901_2_0_10"/>
<dbReference type="Proteomes" id="UP000002725">
    <property type="component" value="Chromosome"/>
</dbReference>
<dbReference type="GO" id="GO:0046872">
    <property type="term" value="F:metal ion binding"/>
    <property type="evidence" value="ECO:0007669"/>
    <property type="project" value="UniProtKB-KW"/>
</dbReference>
<dbReference type="GO" id="GO:0042586">
    <property type="term" value="F:peptide deformylase activity"/>
    <property type="evidence" value="ECO:0007669"/>
    <property type="project" value="UniProtKB-UniRule"/>
</dbReference>
<dbReference type="GO" id="GO:0043686">
    <property type="term" value="P:co-translational protein modification"/>
    <property type="evidence" value="ECO:0007669"/>
    <property type="project" value="TreeGrafter"/>
</dbReference>
<dbReference type="GO" id="GO:0006412">
    <property type="term" value="P:translation"/>
    <property type="evidence" value="ECO:0007669"/>
    <property type="project" value="UniProtKB-UniRule"/>
</dbReference>
<dbReference type="CDD" id="cd00487">
    <property type="entry name" value="Pep_deformylase"/>
    <property type="match status" value="1"/>
</dbReference>
<dbReference type="Gene3D" id="3.90.45.10">
    <property type="entry name" value="Peptide deformylase"/>
    <property type="match status" value="1"/>
</dbReference>
<dbReference type="HAMAP" id="MF_00163">
    <property type="entry name" value="Pep_deformylase"/>
    <property type="match status" value="1"/>
</dbReference>
<dbReference type="InterPro" id="IPR023635">
    <property type="entry name" value="Peptide_deformylase"/>
</dbReference>
<dbReference type="InterPro" id="IPR036821">
    <property type="entry name" value="Peptide_deformylase_sf"/>
</dbReference>
<dbReference type="NCBIfam" id="TIGR00079">
    <property type="entry name" value="pept_deformyl"/>
    <property type="match status" value="1"/>
</dbReference>
<dbReference type="NCBIfam" id="NF001159">
    <property type="entry name" value="PRK00150.1-3"/>
    <property type="match status" value="1"/>
</dbReference>
<dbReference type="PANTHER" id="PTHR10458">
    <property type="entry name" value="PEPTIDE DEFORMYLASE"/>
    <property type="match status" value="1"/>
</dbReference>
<dbReference type="PANTHER" id="PTHR10458:SF22">
    <property type="entry name" value="PEPTIDE DEFORMYLASE"/>
    <property type="match status" value="1"/>
</dbReference>
<dbReference type="Pfam" id="PF01327">
    <property type="entry name" value="Pep_deformylase"/>
    <property type="match status" value="1"/>
</dbReference>
<dbReference type="PIRSF" id="PIRSF004749">
    <property type="entry name" value="Pep_def"/>
    <property type="match status" value="1"/>
</dbReference>
<dbReference type="PRINTS" id="PR01576">
    <property type="entry name" value="PDEFORMYLASE"/>
</dbReference>
<dbReference type="SUPFAM" id="SSF56420">
    <property type="entry name" value="Peptide deformylase"/>
    <property type="match status" value="1"/>
</dbReference>
<organism>
    <name type="scientific">Prosthecochloris aestuarii (strain DSM 271 / SK 413)</name>
    <dbReference type="NCBI Taxonomy" id="290512"/>
    <lineage>
        <taxon>Bacteria</taxon>
        <taxon>Pseudomonadati</taxon>
        <taxon>Chlorobiota</taxon>
        <taxon>Chlorobiia</taxon>
        <taxon>Chlorobiales</taxon>
        <taxon>Chlorobiaceae</taxon>
        <taxon>Prosthecochloris</taxon>
    </lineage>
</organism>
<comment type="function">
    <text evidence="1">Removes the formyl group from the N-terminal Met of newly synthesized proteins. Requires at least a dipeptide for an efficient rate of reaction. N-terminal L-methionine is a prerequisite for activity but the enzyme has broad specificity at other positions.</text>
</comment>
<comment type="catalytic activity">
    <reaction evidence="1">
        <text>N-terminal N-formyl-L-methionyl-[peptide] + H2O = N-terminal L-methionyl-[peptide] + formate</text>
        <dbReference type="Rhea" id="RHEA:24420"/>
        <dbReference type="Rhea" id="RHEA-COMP:10639"/>
        <dbReference type="Rhea" id="RHEA-COMP:10640"/>
        <dbReference type="ChEBI" id="CHEBI:15377"/>
        <dbReference type="ChEBI" id="CHEBI:15740"/>
        <dbReference type="ChEBI" id="CHEBI:49298"/>
        <dbReference type="ChEBI" id="CHEBI:64731"/>
        <dbReference type="EC" id="3.5.1.88"/>
    </reaction>
</comment>
<comment type="cofactor">
    <cofactor evidence="1">
        <name>Fe(2+)</name>
        <dbReference type="ChEBI" id="CHEBI:29033"/>
    </cofactor>
    <text evidence="1">Binds 1 Fe(2+) ion.</text>
</comment>
<comment type="similarity">
    <text evidence="1">Belongs to the polypeptide deformylase family.</text>
</comment>
<evidence type="ECO:0000255" key="1">
    <source>
        <dbReference type="HAMAP-Rule" id="MF_00163"/>
    </source>
</evidence>
<reference key="1">
    <citation type="submission" date="2008-06" db="EMBL/GenBank/DDBJ databases">
        <title>Complete sequence of chromosome of Prosthecochloris aestuarii DSM 271.</title>
        <authorList>
            <consortium name="US DOE Joint Genome Institute"/>
            <person name="Lucas S."/>
            <person name="Copeland A."/>
            <person name="Lapidus A."/>
            <person name="Glavina del Rio T."/>
            <person name="Dalin E."/>
            <person name="Tice H."/>
            <person name="Bruce D."/>
            <person name="Goodwin L."/>
            <person name="Pitluck S."/>
            <person name="Schmutz J."/>
            <person name="Larimer F."/>
            <person name="Land M."/>
            <person name="Hauser L."/>
            <person name="Kyrpides N."/>
            <person name="Anderson I."/>
            <person name="Liu Z."/>
            <person name="Li T."/>
            <person name="Zhao F."/>
            <person name="Overmann J."/>
            <person name="Bryant D.A."/>
            <person name="Richardson P."/>
        </authorList>
    </citation>
    <scope>NUCLEOTIDE SEQUENCE [LARGE SCALE GENOMIC DNA]</scope>
    <source>
        <strain>DSM 271 / SK 413</strain>
    </source>
</reference>
<protein>
    <recommendedName>
        <fullName evidence="1">Peptide deformylase</fullName>
        <shortName evidence="1">PDF</shortName>
        <ecNumber evidence="1">3.5.1.88</ecNumber>
    </recommendedName>
    <alternativeName>
        <fullName evidence="1">Polypeptide deformylase</fullName>
    </alternativeName>
</protein>
<proteinExistence type="inferred from homology"/>
<gene>
    <name evidence="1" type="primary">def</name>
    <name type="ordered locus">Paes_1571</name>
</gene>
<sequence length="186" mass="20778">MILPITIYSDEVLRRKAKPLKGIDTSHEELIGNMIESMRNASGIGLAAPQIGLSMRLLIVDLSPVQGYENAEPMVVINPHILAVKGYNAMEEGCLSIPDIHADVVRPSSIQLKYRNEHFEERVDEFSALMARVLQHEIDHLDGTLFVDKLQRRDRRKVQKSLEDIAAGKVHTTYPVAEINQGAKAS</sequence>